<accession>Q5UKY4</accession>
<accession>Q3V3F9</accession>
<accession>Q5UKY1</accession>
<accession>Q5UKY2</accession>
<accession>Q5UKY3</accession>
<accession>Q5UKY5</accession>
<accession>Q6XJV5</accession>
<accession>Q9D628</accession>
<accession>Q9D642</accession>
<feature type="signal peptide" evidence="1">
    <location>
        <begin position="1"/>
        <end position="25"/>
    </location>
</feature>
<feature type="chain" id="PRO_0000346453" description="Cell surface glycoprotein CD200 receptor 3">
    <location>
        <begin position="26"/>
        <end position="296"/>
    </location>
</feature>
<feature type="topological domain" description="Extracellular" evidence="1">
    <location>
        <begin position="26"/>
        <end position="245"/>
    </location>
</feature>
<feature type="transmembrane region" description="Helical" evidence="1">
    <location>
        <begin position="246"/>
        <end position="266"/>
    </location>
</feature>
<feature type="topological domain" description="Cytoplasmic" evidence="1">
    <location>
        <begin position="267"/>
        <end position="296"/>
    </location>
</feature>
<feature type="domain" description="Ig-like V-type">
    <location>
        <begin position="48"/>
        <end position="162"/>
    </location>
</feature>
<feature type="domain" description="Ig-like C2-type">
    <location>
        <begin position="151"/>
        <end position="232"/>
    </location>
</feature>
<feature type="glycosylation site" description="N-linked (GlcNAc...) asparagine" evidence="1">
    <location>
        <position position="167"/>
    </location>
</feature>
<feature type="glycosylation site" description="N-linked (GlcNAc...) asparagine" evidence="1">
    <location>
        <position position="199"/>
    </location>
</feature>
<feature type="disulfide bond" evidence="2">
    <location>
        <begin position="75"/>
        <end position="146"/>
    </location>
</feature>
<feature type="disulfide bond" evidence="2">
    <location>
        <begin position="172"/>
        <end position="220"/>
    </location>
</feature>
<feature type="splice variant" id="VSP_035003" description="In isoform 6, isoform 7, isoform 8 and isoform 9." evidence="10 11 12">
    <location>
        <begin position="165"/>
        <end position="237"/>
    </location>
</feature>
<feature type="splice variant" id="VSP_035004" description="In isoform 5." evidence="12">
    <original>VFCFISHLT</original>
    <variation>CVLLYLPFD</variation>
    <location>
        <begin position="218"/>
        <end position="226"/>
    </location>
</feature>
<feature type="splice variant" id="VSP_035005" description="In isoform 5." evidence="12">
    <location>
        <begin position="227"/>
        <end position="296"/>
    </location>
</feature>
<feature type="splice variant" id="VSP_035006" description="In isoform 2 and isoform 7." evidence="10">
    <original>SSRDLVFMKERRSKRSVWQREALG</original>
    <variation>RSNEEPTTLAPT</variation>
    <location>
        <begin position="273"/>
        <end position="296"/>
    </location>
</feature>
<feature type="splice variant" id="VSP_035007" description="In isoform 3 and isoform 8." evidence="8 10 12">
    <original>SSRDLVFMKERRSKRSVWQREALG</original>
    <variation>RVPEGS</variation>
    <location>
        <begin position="273"/>
        <end position="296"/>
    </location>
</feature>
<feature type="splice variant" id="VSP_035008" description="In isoform 4 and isoform 9." evidence="9 11 12">
    <original>SSRDLVFMKERRSKRSVWQREALG</original>
    <variation>RWI</variation>
    <location>
        <begin position="273"/>
        <end position="296"/>
    </location>
</feature>
<feature type="sequence conflict" description="In Ref. 1; AAV40662/AAV40663." evidence="13" ref="1">
    <original>L</original>
    <variation>S</variation>
    <location>
        <position position="10"/>
    </location>
</feature>
<feature type="sequence conflict" description="In Ref. 3; BAC30726." evidence="13" ref="3">
    <original>Q</original>
    <variation>K</variation>
    <location>
        <position position="127"/>
    </location>
</feature>
<feature type="sequence conflict" description="In Ref. 3; BAC30726." evidence="13" ref="3">
    <original>R</original>
    <variation>T</variation>
    <location>
        <position position="168"/>
    </location>
</feature>
<protein>
    <recommendedName>
        <fullName>Cell surface glycoprotein CD200 receptor 3</fullName>
    </recommendedName>
    <alternativeName>
        <fullName>CD200 cell surface glycoprotein receptor-like 3</fullName>
        <shortName>CD200 receptor-like 3</shortName>
    </alternativeName>
    <alternativeName>
        <fullName>CD200 cell surface glycoprotein receptor-like b</fullName>
        <shortName>CD200RLb</shortName>
    </alternativeName>
    <alternativeName>
        <fullName>Cell surface glycoprotein OX2 receptor 3</fullName>
    </alternativeName>
</protein>
<sequence>MHALGRTLALMLLIFITILVPESSCSVKGREEIPPDDSFPFSDDNIFPDGVGVTMEIEIITPVSVQIGIKAQLFCHPSPSKEATLRIWEITPRDWPSCRLPYRAELQQISKKICTERGTTRVPAHHQSSDLPIKSMALKHDGHYSCRIETTDGIFQERHSIQVPGENRTVVCEAIASKPAMQILWTPDEDCVTKSKSHNDTMIVRSKCHREKNNGHSVFCFISHLTDNWILSMEQNRGTTSILPSLLSILYVKLAVTVLIVGFAFFQKRNYFSSRDLVFMKERRSKRSVWQREALG</sequence>
<comment type="function">
    <text evidence="3 4 6 7">According to PubMed:15187158 isoform 4 is a receptor for the CD200 cell surface glycoprotein. According to PubMed:16081818 isoform 4 is not a receptor for the CD200/OX2 cell surface glycoprotein. Isoform 1, isoform 2 and isoform 3 are involved in the recruitment or surface expression of the TYROBP receptor. Isoform 6, isoform 7 and isoform 8 are not involved in the recruitment or surface expression of the TYROBP receptor.</text>
</comment>
<comment type="subunit">
    <text evidence="3 6">Isoform 3 interacts with TYROBP. Isoform 8 does not interact with TYROBP.</text>
</comment>
<comment type="subcellular location">
    <subcellularLocation>
        <location evidence="13">Membrane</location>
        <topology evidence="13">Single-pass type I membrane protein</topology>
    </subcellularLocation>
</comment>
<comment type="alternative products">
    <event type="alternative splicing"/>
    <isoform>
        <id>Q5UKY4-1</id>
        <name>1</name>
        <name>Cd200r3b</name>
        <sequence type="displayed"/>
    </isoform>
    <isoform>
        <id>Q5UKY4-2</id>
        <name>2</name>
        <name>Cd200r3a</name>
        <sequence type="described" ref="VSP_035006"/>
    </isoform>
    <isoform>
        <id>Q5UKY4-3</id>
        <name>3</name>
        <name>Cd200r3c</name>
        <sequence type="described" ref="VSP_035007"/>
    </isoform>
    <isoform>
        <id>Q5UKY4-4</id>
        <name>4</name>
        <sequence type="described" ref="VSP_035008"/>
    </isoform>
    <isoform>
        <id>Q5UKY4-5</id>
        <name>5</name>
        <sequence type="described" ref="VSP_035004 VSP_035005"/>
    </isoform>
    <isoform>
        <id>Q5UKY4-6</id>
        <name>6</name>
        <name>Cd200r3e</name>
        <sequence type="described" ref="VSP_035003"/>
    </isoform>
    <isoform>
        <id>Q5UKY4-7</id>
        <name>7</name>
        <name>Cd200r3d</name>
        <sequence type="described" ref="VSP_035003 VSP_035006"/>
    </isoform>
    <isoform>
        <id>Q5UKY4-8</id>
        <name>8</name>
        <name>Cd200r3f</name>
        <sequence type="described" ref="VSP_035003 VSP_035007"/>
    </isoform>
    <isoform>
        <id>Q5UKY4-9</id>
        <name>9</name>
        <sequence type="described" ref="VSP_035003 VSP_035008"/>
    </isoform>
</comment>
<comment type="tissue specificity">
    <text evidence="3 4 5 6">Expressed in uterus and bone marrow-derived mast cells (at protein level). Expressed in uterus, spleen, bone marrow-derived dendritic, basophil and mast cells. Expressed in the lung of N.brasiliensis-infected mice. Weakly expressed in brain, testis, lung and thymus.</text>
</comment>
<comment type="developmental stage">
    <text evidence="5">Expressed in uterus at 12.5 dpc (at protein level).</text>
</comment>
<comment type="similarity">
    <text evidence="13">Belongs to the CD200R family.</text>
</comment>
<comment type="caution">
    <text evidence="14">According to some authors, isoform 3 (truncated at the N-terminus) is not a receptor for the CD200/OX2 cell surface glycoprotein.</text>
</comment>
<evidence type="ECO:0000255" key="1"/>
<evidence type="ECO:0000255" key="2">
    <source>
        <dbReference type="PROSITE-ProRule" id="PRU00114"/>
    </source>
</evidence>
<evidence type="ECO:0000269" key="3">
    <source>
    </source>
</evidence>
<evidence type="ECO:0000269" key="4">
    <source>
    </source>
</evidence>
<evidence type="ECO:0000269" key="5">
    <source>
    </source>
</evidence>
<evidence type="ECO:0000269" key="6">
    <source>
    </source>
</evidence>
<evidence type="ECO:0000269" key="7">
    <source>
    </source>
</evidence>
<evidence type="ECO:0000303" key="8">
    <source>
    </source>
</evidence>
<evidence type="ECO:0000303" key="9">
    <source>
    </source>
</evidence>
<evidence type="ECO:0000303" key="10">
    <source>
    </source>
</evidence>
<evidence type="ECO:0000303" key="11">
    <source>
    </source>
</evidence>
<evidence type="ECO:0000303" key="12">
    <source>
    </source>
</evidence>
<evidence type="ECO:0000305" key="13"/>
<evidence type="ECO:0000305" key="14">
    <source>
    </source>
</evidence>
<reference key="1">
    <citation type="journal article" date="2004" name="J. Biol. Chem.">
        <title>CD200 receptor family members represent novel DAP12-associated activating receptors on basophils and mast cells.</title>
        <authorList>
            <person name="Voehringer D."/>
            <person name="Rosen D.B."/>
            <person name="Lanier L.L."/>
            <person name="Locksley R.M."/>
        </authorList>
    </citation>
    <scope>NUCLEOTIDE SEQUENCE [MRNA] (ISOFORMS 1; 2; 3; 6; 7 AND 8)</scope>
    <scope>FUNCTION</scope>
    <scope>INTERACTION WITH TYROBP</scope>
    <scope>TISSUE SPECIFICITY</scope>
    <source>
        <strain>BALB/cJ</strain>
    </source>
</reference>
<reference key="2">
    <citation type="journal article" date="2004" name="J. Immunol.">
        <title>CD200 is a ligand for all members of the CD200R family of immunoregulatory molecules.</title>
        <authorList>
            <person name="Gorczynski R."/>
            <person name="Chen Z."/>
            <person name="Kai Y."/>
            <person name="Lee L."/>
            <person name="Wong S."/>
            <person name="Marsden P.A."/>
        </authorList>
    </citation>
    <scope>NUCLEOTIDE SEQUENCE [MRNA] (ISOFORM 4)</scope>
    <scope>FUNCTION</scope>
    <scope>TISSUE SPECIFICITY</scope>
    <source>
        <strain>C57BL/6J</strain>
    </source>
</reference>
<reference key="3">
    <citation type="journal article" date="2005" name="Science">
        <title>The transcriptional landscape of the mammalian genome.</title>
        <authorList>
            <person name="Carninci P."/>
            <person name="Kasukawa T."/>
            <person name="Katayama S."/>
            <person name="Gough J."/>
            <person name="Frith M.C."/>
            <person name="Maeda N."/>
            <person name="Oyama R."/>
            <person name="Ravasi T."/>
            <person name="Lenhard B."/>
            <person name="Wells C."/>
            <person name="Kodzius R."/>
            <person name="Shimokawa K."/>
            <person name="Bajic V.B."/>
            <person name="Brenner S.E."/>
            <person name="Batalov S."/>
            <person name="Forrest A.R."/>
            <person name="Zavolan M."/>
            <person name="Davis M.J."/>
            <person name="Wilming L.G."/>
            <person name="Aidinis V."/>
            <person name="Allen J.E."/>
            <person name="Ambesi-Impiombato A."/>
            <person name="Apweiler R."/>
            <person name="Aturaliya R.N."/>
            <person name="Bailey T.L."/>
            <person name="Bansal M."/>
            <person name="Baxter L."/>
            <person name="Beisel K.W."/>
            <person name="Bersano T."/>
            <person name="Bono H."/>
            <person name="Chalk A.M."/>
            <person name="Chiu K.P."/>
            <person name="Choudhary V."/>
            <person name="Christoffels A."/>
            <person name="Clutterbuck D.R."/>
            <person name="Crowe M.L."/>
            <person name="Dalla E."/>
            <person name="Dalrymple B.P."/>
            <person name="de Bono B."/>
            <person name="Della Gatta G."/>
            <person name="di Bernardo D."/>
            <person name="Down T."/>
            <person name="Engstrom P."/>
            <person name="Fagiolini M."/>
            <person name="Faulkner G."/>
            <person name="Fletcher C.F."/>
            <person name="Fukushima T."/>
            <person name="Furuno M."/>
            <person name="Futaki S."/>
            <person name="Gariboldi M."/>
            <person name="Georgii-Hemming P."/>
            <person name="Gingeras T.R."/>
            <person name="Gojobori T."/>
            <person name="Green R.E."/>
            <person name="Gustincich S."/>
            <person name="Harbers M."/>
            <person name="Hayashi Y."/>
            <person name="Hensch T.K."/>
            <person name="Hirokawa N."/>
            <person name="Hill D."/>
            <person name="Huminiecki L."/>
            <person name="Iacono M."/>
            <person name="Ikeo K."/>
            <person name="Iwama A."/>
            <person name="Ishikawa T."/>
            <person name="Jakt M."/>
            <person name="Kanapin A."/>
            <person name="Katoh M."/>
            <person name="Kawasawa Y."/>
            <person name="Kelso J."/>
            <person name="Kitamura H."/>
            <person name="Kitano H."/>
            <person name="Kollias G."/>
            <person name="Krishnan S.P."/>
            <person name="Kruger A."/>
            <person name="Kummerfeld S.K."/>
            <person name="Kurochkin I.V."/>
            <person name="Lareau L.F."/>
            <person name="Lazarevic D."/>
            <person name="Lipovich L."/>
            <person name="Liu J."/>
            <person name="Liuni S."/>
            <person name="McWilliam S."/>
            <person name="Madan Babu M."/>
            <person name="Madera M."/>
            <person name="Marchionni L."/>
            <person name="Matsuda H."/>
            <person name="Matsuzawa S."/>
            <person name="Miki H."/>
            <person name="Mignone F."/>
            <person name="Miyake S."/>
            <person name="Morris K."/>
            <person name="Mottagui-Tabar S."/>
            <person name="Mulder N."/>
            <person name="Nakano N."/>
            <person name="Nakauchi H."/>
            <person name="Ng P."/>
            <person name="Nilsson R."/>
            <person name="Nishiguchi S."/>
            <person name="Nishikawa S."/>
            <person name="Nori F."/>
            <person name="Ohara O."/>
            <person name="Okazaki Y."/>
            <person name="Orlando V."/>
            <person name="Pang K.C."/>
            <person name="Pavan W.J."/>
            <person name="Pavesi G."/>
            <person name="Pesole G."/>
            <person name="Petrovsky N."/>
            <person name="Piazza S."/>
            <person name="Reed J."/>
            <person name="Reid J.F."/>
            <person name="Ring B.Z."/>
            <person name="Ringwald M."/>
            <person name="Rost B."/>
            <person name="Ruan Y."/>
            <person name="Salzberg S.L."/>
            <person name="Sandelin A."/>
            <person name="Schneider C."/>
            <person name="Schoenbach C."/>
            <person name="Sekiguchi K."/>
            <person name="Semple C.A."/>
            <person name="Seno S."/>
            <person name="Sessa L."/>
            <person name="Sheng Y."/>
            <person name="Shibata Y."/>
            <person name="Shimada H."/>
            <person name="Shimada K."/>
            <person name="Silva D."/>
            <person name="Sinclair B."/>
            <person name="Sperling S."/>
            <person name="Stupka E."/>
            <person name="Sugiura K."/>
            <person name="Sultana R."/>
            <person name="Takenaka Y."/>
            <person name="Taki K."/>
            <person name="Tammoja K."/>
            <person name="Tan S.L."/>
            <person name="Tang S."/>
            <person name="Taylor M.S."/>
            <person name="Tegner J."/>
            <person name="Teichmann S.A."/>
            <person name="Ueda H.R."/>
            <person name="van Nimwegen E."/>
            <person name="Verardo R."/>
            <person name="Wei C.L."/>
            <person name="Yagi K."/>
            <person name="Yamanishi H."/>
            <person name="Zabarovsky E."/>
            <person name="Zhu S."/>
            <person name="Zimmer A."/>
            <person name="Hide W."/>
            <person name="Bult C."/>
            <person name="Grimmond S.M."/>
            <person name="Teasdale R.D."/>
            <person name="Liu E.T."/>
            <person name="Brusic V."/>
            <person name="Quackenbush J."/>
            <person name="Wahlestedt C."/>
            <person name="Mattick J.S."/>
            <person name="Hume D.A."/>
            <person name="Kai C."/>
            <person name="Sasaki D."/>
            <person name="Tomaru Y."/>
            <person name="Fukuda S."/>
            <person name="Kanamori-Katayama M."/>
            <person name="Suzuki M."/>
            <person name="Aoki J."/>
            <person name="Arakawa T."/>
            <person name="Iida J."/>
            <person name="Imamura K."/>
            <person name="Itoh M."/>
            <person name="Kato T."/>
            <person name="Kawaji H."/>
            <person name="Kawagashira N."/>
            <person name="Kawashima T."/>
            <person name="Kojima M."/>
            <person name="Kondo S."/>
            <person name="Konno H."/>
            <person name="Nakano K."/>
            <person name="Ninomiya N."/>
            <person name="Nishio T."/>
            <person name="Okada M."/>
            <person name="Plessy C."/>
            <person name="Shibata K."/>
            <person name="Shiraki T."/>
            <person name="Suzuki S."/>
            <person name="Tagami M."/>
            <person name="Waki K."/>
            <person name="Watahiki A."/>
            <person name="Okamura-Oho Y."/>
            <person name="Suzuki H."/>
            <person name="Kawai J."/>
            <person name="Hayashizaki Y."/>
        </authorList>
    </citation>
    <scope>NUCLEOTIDE SEQUENCE [LARGE SCALE MRNA] (ISOFORMS 5; 8 AND 9)</scope>
    <source>
        <strain>C57BL/6J</strain>
        <tissue>Head</tissue>
        <tissue>Skin</tissue>
    </source>
</reference>
<reference key="4">
    <citation type="journal article" date="2004" name="Genome Res.">
        <title>The status, quality, and expansion of the NIH full-length cDNA project: the Mammalian Gene Collection (MGC).</title>
        <authorList>
            <consortium name="The MGC Project Team"/>
        </authorList>
    </citation>
    <scope>NUCLEOTIDE SEQUENCE [LARGE SCALE MRNA] (ISOFORM 9)</scope>
</reference>
<reference key="5">
    <citation type="journal article" date="2003" name="J. Immunol.">
        <title>Characterization of the CD200 receptor family in mice and humans and their interactions with CD200.</title>
        <authorList>
            <person name="Wright G.J."/>
            <person name="Cherwinski H."/>
            <person name="Foster-Cuevas M."/>
            <person name="Brooke G."/>
            <person name="Puklavec M.J."/>
            <person name="Bigler M."/>
            <person name="Song Y."/>
            <person name="Jenmalm M."/>
            <person name="Gorman D."/>
            <person name="McClanahan T."/>
            <person name="Liu M.-R."/>
            <person name="Brown M.H."/>
            <person name="Sedgwick J.D."/>
            <person name="Phillips J.H."/>
            <person name="Barclay A.N."/>
        </authorList>
    </citation>
    <scope>NUCLEOTIDE SEQUENCE [MRNA] OF 11-296 (ISOFORM 3)</scope>
    <scope>FUNCTION</scope>
    <scope>SUBUNIT</scope>
    <scope>TISSUE SPECIFICITY</scope>
</reference>
<reference key="6">
    <citation type="journal article" date="2004" name="Am. J. Reprod. Immunol.">
        <title>Structural and functional heterogeneity in the CD200R family of immunoregulatory molecules and their expression at the feto-maternal interface.</title>
        <authorList>
            <person name="Gorczynski R.M."/>
            <person name="Chen Z."/>
            <person name="Clark D.A."/>
            <person name="Kai Y."/>
            <person name="Lee L."/>
            <person name="Nachman J."/>
            <person name="Wong S."/>
            <person name="Marsden P."/>
        </authorList>
    </citation>
    <scope>IDENTIFICATION</scope>
    <scope>DEVELOPMENTAL STAGE</scope>
    <scope>TISSUE SPECIFICITY</scope>
</reference>
<reference key="7">
    <citation type="journal article" date="2005" name="J. Immunol.">
        <title>Recombinant CD200 protein does not bind activating proteins closely related to CD200 receptor.</title>
        <authorList>
            <person name="Hatherley D."/>
            <person name="Cherwinski H.M."/>
            <person name="Moshref M."/>
            <person name="Barclay A.N."/>
        </authorList>
    </citation>
    <scope>FUNCTION</scope>
</reference>
<proteinExistence type="evidence at protein level"/>
<keyword id="KW-0025">Alternative splicing</keyword>
<keyword id="KW-1015">Disulfide bond</keyword>
<keyword id="KW-0325">Glycoprotein</keyword>
<keyword id="KW-0393">Immunoglobulin domain</keyword>
<keyword id="KW-0472">Membrane</keyword>
<keyword id="KW-1185">Reference proteome</keyword>
<keyword id="KW-0677">Repeat</keyword>
<keyword id="KW-0732">Signal</keyword>
<keyword id="KW-0812">Transmembrane</keyword>
<keyword id="KW-1133">Transmembrane helix</keyword>
<organism>
    <name type="scientific">Mus musculus</name>
    <name type="common">Mouse</name>
    <dbReference type="NCBI Taxonomy" id="10090"/>
    <lineage>
        <taxon>Eukaryota</taxon>
        <taxon>Metazoa</taxon>
        <taxon>Chordata</taxon>
        <taxon>Craniata</taxon>
        <taxon>Vertebrata</taxon>
        <taxon>Euteleostomi</taxon>
        <taxon>Mammalia</taxon>
        <taxon>Eutheria</taxon>
        <taxon>Euarchontoglires</taxon>
        <taxon>Glires</taxon>
        <taxon>Rodentia</taxon>
        <taxon>Myomorpha</taxon>
        <taxon>Muroidea</taxon>
        <taxon>Muridae</taxon>
        <taxon>Murinae</taxon>
        <taxon>Mus</taxon>
        <taxon>Mus</taxon>
    </lineage>
</organism>
<name>MO2R3_MOUSE</name>
<gene>
    <name type="primary">Cd200r3</name>
    <name type="synonym">Cd200rlb</name>
</gene>
<dbReference type="EMBL" id="AY703837">
    <property type="protein sequence ID" value="AAV40659.1"/>
    <property type="molecule type" value="mRNA"/>
</dbReference>
<dbReference type="EMBL" id="AY703838">
    <property type="protein sequence ID" value="AAV40660.1"/>
    <property type="molecule type" value="mRNA"/>
</dbReference>
<dbReference type="EMBL" id="AY703839">
    <property type="protein sequence ID" value="AAV40661.1"/>
    <property type="molecule type" value="mRNA"/>
</dbReference>
<dbReference type="EMBL" id="AY703840">
    <property type="protein sequence ID" value="AAV40662.1"/>
    <property type="molecule type" value="mRNA"/>
</dbReference>
<dbReference type="EMBL" id="AY703841">
    <property type="protein sequence ID" value="AAV40663.1"/>
    <property type="molecule type" value="mRNA"/>
</dbReference>
<dbReference type="EMBL" id="AY703842">
    <property type="protein sequence ID" value="AAV40664.1"/>
    <property type="molecule type" value="mRNA"/>
</dbReference>
<dbReference type="EMBL" id="AY230199">
    <property type="protein sequence ID" value="AAO84053.1"/>
    <property type="molecule type" value="mRNA"/>
</dbReference>
<dbReference type="EMBL" id="AK014637">
    <property type="protein sequence ID" value="BAB29480.1"/>
    <property type="molecule type" value="mRNA"/>
</dbReference>
<dbReference type="EMBL" id="AK014671">
    <property type="protein sequence ID" value="BAB29497.1"/>
    <property type="molecule type" value="mRNA"/>
</dbReference>
<dbReference type="EMBL" id="AK040868">
    <property type="protein sequence ID" value="BAC30726.1"/>
    <property type="molecule type" value="mRNA"/>
</dbReference>
<dbReference type="EMBL" id="BC106838">
    <property type="protein sequence ID" value="AAI06839.1"/>
    <property type="molecule type" value="mRNA"/>
</dbReference>
<dbReference type="CCDS" id="CCDS49856.1">
    <molecule id="Q5UKY4-3"/>
</dbReference>
<dbReference type="CCDS" id="CCDS49857.1">
    <molecule id="Q5UKY4-4"/>
</dbReference>
<dbReference type="CCDS" id="CCDS49858.1">
    <molecule id="Q5UKY4-8"/>
</dbReference>
<dbReference type="CCDS" id="CCDS49859.1">
    <molecule id="Q5UKY4-9"/>
</dbReference>
<dbReference type="RefSeq" id="NP_001121604.1">
    <molecule id="Q5UKY4-3"/>
    <property type="nucleotide sequence ID" value="NM_001128132.1"/>
</dbReference>
<dbReference type="RefSeq" id="NP_001121605.1">
    <molecule id="Q5UKY4-8"/>
    <property type="nucleotide sequence ID" value="NM_001128133.1"/>
</dbReference>
<dbReference type="RefSeq" id="NP_081854.1">
    <molecule id="Q5UKY4-9"/>
    <property type="nucleotide sequence ID" value="NM_027578.1"/>
</dbReference>
<dbReference type="RefSeq" id="NP_083294.2">
    <molecule id="Q5UKY4-4"/>
    <property type="nucleotide sequence ID" value="NM_029018.4"/>
</dbReference>
<dbReference type="RefSeq" id="XP_006522737.1">
    <molecule id="Q5UKY4-2"/>
    <property type="nucleotide sequence ID" value="XM_006522674.4"/>
</dbReference>
<dbReference type="RefSeq" id="XP_017172641.1">
    <molecule id="Q5UKY4-2"/>
    <property type="nucleotide sequence ID" value="XM_017317152.2"/>
</dbReference>
<dbReference type="RefSeq" id="XP_017172642.1">
    <molecule id="Q5UKY4-2"/>
    <property type="nucleotide sequence ID" value="XM_017317153.2"/>
</dbReference>
<dbReference type="RefSeq" id="XP_017172643.1">
    <molecule id="Q5UKY4-7"/>
    <property type="nucleotide sequence ID" value="XM_017317154.2"/>
</dbReference>
<dbReference type="SMR" id="Q5UKY4"/>
<dbReference type="FunCoup" id="Q5UKY4">
    <property type="interactions" value="39"/>
</dbReference>
<dbReference type="STRING" id="10090.ENSMUSP00000110258"/>
<dbReference type="GlyCosmos" id="Q5UKY4">
    <property type="glycosylation" value="2 sites, No reported glycans"/>
</dbReference>
<dbReference type="GlyGen" id="Q5UKY4">
    <property type="glycosylation" value="2 sites"/>
</dbReference>
<dbReference type="iPTMnet" id="Q5UKY4"/>
<dbReference type="PhosphoSitePlus" id="Q5UKY4"/>
<dbReference type="PaxDb" id="10090-ENSMUSP00000110258"/>
<dbReference type="DNASU" id="74603"/>
<dbReference type="Ensembl" id="ENSMUST00000048479.14">
    <molecule id="Q5UKY4-1"/>
    <property type="protein sequence ID" value="ENSMUSP00000036624.8"/>
    <property type="gene ID" value="ENSMUSG00000036172.18"/>
</dbReference>
<dbReference type="Ensembl" id="ENSMUST00000077178.13">
    <molecule id="Q5UKY4-6"/>
    <property type="protein sequence ID" value="ENSMUSP00000076421.7"/>
    <property type="gene ID" value="ENSMUSG00000036172.18"/>
</dbReference>
<dbReference type="Ensembl" id="ENSMUST00000114611.10">
    <molecule id="Q5UKY4-3"/>
    <property type="protein sequence ID" value="ENSMUSP00000110258.4"/>
    <property type="gene ID" value="ENSMUSG00000036172.18"/>
</dbReference>
<dbReference type="Ensembl" id="ENSMUST00000114612.8">
    <molecule id="Q5UKY4-7"/>
    <property type="protein sequence ID" value="ENSMUSP00000110259.2"/>
    <property type="gene ID" value="ENSMUSG00000036172.18"/>
</dbReference>
<dbReference type="Ensembl" id="ENSMUST00000114613.9">
    <molecule id="Q5UKY4-2"/>
    <property type="protein sequence ID" value="ENSMUSP00000110260.3"/>
    <property type="gene ID" value="ENSMUSG00000036172.18"/>
</dbReference>
<dbReference type="Ensembl" id="ENSMUST00000114622.10">
    <molecule id="Q5UKY4-8"/>
    <property type="protein sequence ID" value="ENSMUSP00000110269.4"/>
    <property type="gene ID" value="ENSMUSG00000036172.18"/>
</dbReference>
<dbReference type="Ensembl" id="ENSMUST00000164007.8">
    <molecule id="Q5UKY4-4"/>
    <property type="protein sequence ID" value="ENSMUSP00000130480.2"/>
    <property type="gene ID" value="ENSMUSG00000036172.18"/>
</dbReference>
<dbReference type="Ensembl" id="ENSMUST00000171779.8">
    <molecule id="Q5UKY4-9"/>
    <property type="protein sequence ID" value="ENSMUSP00000132938.2"/>
    <property type="gene ID" value="ENSMUSG00000036172.18"/>
</dbReference>
<dbReference type="GeneID" id="74603"/>
<dbReference type="KEGG" id="mmu:74603"/>
<dbReference type="UCSC" id="uc007zhx.2">
    <molecule id="Q5UKY4-2"/>
    <property type="organism name" value="mouse"/>
</dbReference>
<dbReference type="UCSC" id="uc007zhy.2">
    <molecule id="Q5UKY4-7"/>
    <property type="organism name" value="mouse"/>
</dbReference>
<dbReference type="UCSC" id="uc007zhz.2">
    <molecule id="Q5UKY4-1"/>
    <property type="organism name" value="mouse"/>
</dbReference>
<dbReference type="UCSC" id="uc007zia.2">
    <molecule id="Q5UKY4-6"/>
    <property type="organism name" value="mouse"/>
</dbReference>
<dbReference type="UCSC" id="uc007zib.2">
    <molecule id="Q5UKY4-3"/>
    <property type="organism name" value="mouse"/>
</dbReference>
<dbReference type="UCSC" id="uc007zic.2">
    <molecule id="Q5UKY4-8"/>
    <property type="organism name" value="mouse"/>
</dbReference>
<dbReference type="UCSC" id="uc007zid.2">
    <molecule id="Q5UKY4-4"/>
    <property type="organism name" value="mouse"/>
</dbReference>
<dbReference type="UCSC" id="uc007zie.2">
    <molecule id="Q5UKY4-9"/>
    <property type="organism name" value="mouse"/>
</dbReference>
<dbReference type="AGR" id="MGI:1921853"/>
<dbReference type="CTD" id="74603"/>
<dbReference type="MGI" id="MGI:1921853">
    <property type="gene designation" value="Cd200r3"/>
</dbReference>
<dbReference type="VEuPathDB" id="HostDB:ENSMUSG00000036172"/>
<dbReference type="eggNOG" id="ENOG502S9IV">
    <property type="taxonomic scope" value="Eukaryota"/>
</dbReference>
<dbReference type="GeneTree" id="ENSGT00390000014496"/>
<dbReference type="InParanoid" id="Q5UKY4"/>
<dbReference type="OMA" id="GFRTTIC"/>
<dbReference type="OrthoDB" id="8915654at2759"/>
<dbReference type="PhylomeDB" id="Q5UKY4"/>
<dbReference type="TreeFam" id="TF335960"/>
<dbReference type="BioGRID-ORCS" id="74603">
    <property type="hits" value="0 hits in 77 CRISPR screens"/>
</dbReference>
<dbReference type="ChiTaRS" id="Cd200r3">
    <property type="organism name" value="mouse"/>
</dbReference>
<dbReference type="PRO" id="PR:Q5UKY4"/>
<dbReference type="Proteomes" id="UP000000589">
    <property type="component" value="Chromosome 16"/>
</dbReference>
<dbReference type="RNAct" id="Q5UKY4">
    <property type="molecule type" value="protein"/>
</dbReference>
<dbReference type="Bgee" id="ENSMUSG00000036172">
    <property type="expression patterns" value="Expressed in urinary bladder urothelium and 31 other cell types or tissues"/>
</dbReference>
<dbReference type="ExpressionAtlas" id="Q5UKY4">
    <property type="expression patterns" value="baseline and differential"/>
</dbReference>
<dbReference type="GO" id="GO:0009897">
    <property type="term" value="C:external side of plasma membrane"/>
    <property type="evidence" value="ECO:0000314"/>
    <property type="project" value="MGI"/>
</dbReference>
<dbReference type="GO" id="GO:0038023">
    <property type="term" value="F:signaling receptor activity"/>
    <property type="evidence" value="ECO:0000314"/>
    <property type="project" value="MGI"/>
</dbReference>
<dbReference type="GO" id="GO:0150077">
    <property type="term" value="P:regulation of neuroinflammatory response"/>
    <property type="evidence" value="ECO:0007669"/>
    <property type="project" value="InterPro"/>
</dbReference>
<dbReference type="Gene3D" id="2.60.40.10">
    <property type="entry name" value="Immunoglobulins"/>
    <property type="match status" value="2"/>
</dbReference>
<dbReference type="InterPro" id="IPR040012">
    <property type="entry name" value="CD200R"/>
</dbReference>
<dbReference type="InterPro" id="IPR007110">
    <property type="entry name" value="Ig-like_dom"/>
</dbReference>
<dbReference type="InterPro" id="IPR013783">
    <property type="entry name" value="Ig-like_fold"/>
</dbReference>
<dbReference type="PANTHER" id="PTHR21462:SF2">
    <property type="entry name" value="CELL SURFACE GLYCOPROTEIN CD200 RECEPTOR 2"/>
    <property type="match status" value="1"/>
</dbReference>
<dbReference type="PANTHER" id="PTHR21462">
    <property type="entry name" value="CELL SURFACE GLYCOPROTEIN OX2 RECEPTOR PRECURSOR"/>
    <property type="match status" value="1"/>
</dbReference>
<dbReference type="PROSITE" id="PS50835">
    <property type="entry name" value="IG_LIKE"/>
    <property type="match status" value="1"/>
</dbReference>